<accession>Q936F4</accession>
<sequence length="256" mass="29458">MIKRVNKLVLGISLLFLVISITAGCDMGKEEEIKKSFEKTLSMYPIKNLEDLYDKEGYRDDQFDKNDKGTWIIGSEMATQNKGEALKVKGMVLYMNRNTRSAKGFYYVNAVKKDEDGRPQDNKIEYPVKMVDNKIIPTKDIKDGNIKKEIENFKFFAQYGTFKDLSKYKDGDISYNPEVPSYSAKYQLTNDDYNVKQLRKRYDIPTNKAPKLLLKGSGDLKGSSVGYKDIEFTFVEKKGENTFFTDSLHLEPSEDK</sequence>
<organism>
    <name type="scientific">Staphylococcus aureus</name>
    <dbReference type="NCBI Taxonomy" id="1280"/>
    <lineage>
        <taxon>Bacteria</taxon>
        <taxon>Bacillati</taxon>
        <taxon>Bacillota</taxon>
        <taxon>Bacilli</taxon>
        <taxon>Bacillales</taxon>
        <taxon>Staphylococcaceae</taxon>
        <taxon>Staphylococcus</taxon>
    </lineage>
</organism>
<feature type="signal peptide" evidence="1">
    <location>
        <begin position="1"/>
        <end position="24"/>
    </location>
</feature>
<feature type="chain" id="PRO_0000282171" description="Uncharacterized lipoprotein in plc 3'region">
    <location>
        <begin position="25"/>
        <end position="256"/>
    </location>
</feature>
<feature type="lipid moiety-binding region" description="N-palmitoyl cysteine" evidence="1">
    <location>
        <position position="25"/>
    </location>
</feature>
<feature type="lipid moiety-binding region" description="S-diacylglycerol cysteine" evidence="1">
    <location>
        <position position="25"/>
    </location>
</feature>
<keyword id="KW-1003">Cell membrane</keyword>
<keyword id="KW-0449">Lipoprotein</keyword>
<keyword id="KW-0472">Membrane</keyword>
<keyword id="KW-0564">Palmitate</keyword>
<keyword id="KW-0732">Signal</keyword>
<name>YPLC2_STAAU</name>
<comment type="subcellular location">
    <subcellularLocation>
        <location evidence="1">Cell membrane</location>
        <topology evidence="1">Lipid-anchor</topology>
    </subcellularLocation>
</comment>
<comment type="similarity">
    <text evidence="2">Belongs to the staphylococcal tandem lipoprotein family.</text>
</comment>
<comment type="sequence caution" evidence="2">
    <conflict type="erroneous termination">
        <sequence resource="EMBL-CDS" id="AAL26684"/>
    </conflict>
    <text>Truncated C-terminus.</text>
</comment>
<dbReference type="EMBL" id="U10927">
    <property type="protein sequence ID" value="AAL26684.1"/>
    <property type="status" value="ALT_SEQ"/>
    <property type="molecule type" value="Genomic_DNA"/>
</dbReference>
<dbReference type="SMR" id="Q936F4"/>
<dbReference type="GO" id="GO:0005886">
    <property type="term" value="C:plasma membrane"/>
    <property type="evidence" value="ECO:0007669"/>
    <property type="project" value="UniProtKB-SubCell"/>
</dbReference>
<dbReference type="Gene3D" id="2.50.20.40">
    <property type="match status" value="1"/>
</dbReference>
<dbReference type="InterPro" id="IPR007595">
    <property type="entry name" value="Csa"/>
</dbReference>
<dbReference type="InterPro" id="IPR038641">
    <property type="entry name" value="Csa_sf"/>
</dbReference>
<dbReference type="NCBIfam" id="TIGR01742">
    <property type="entry name" value="SA_tandem_lipo"/>
    <property type="match status" value="1"/>
</dbReference>
<dbReference type="Pfam" id="PF04507">
    <property type="entry name" value="DUF576"/>
    <property type="match status" value="1"/>
</dbReference>
<dbReference type="PROSITE" id="PS51257">
    <property type="entry name" value="PROKAR_LIPOPROTEIN"/>
    <property type="match status" value="1"/>
</dbReference>
<reference key="1">
    <citation type="journal article" date="2002" name="J. Bacteriol.">
        <title>Type 1 capsule genes of Staphylococcus aureus are carried in a staphylococcal cassette chromosome genetic element.</title>
        <authorList>
            <person name="Luong T.T."/>
            <person name="Ouyang S."/>
            <person name="Bush K."/>
            <person name="Lee C.Y."/>
        </authorList>
    </citation>
    <scope>NUCLEOTIDE SEQUENCE [GENOMIC DNA]</scope>
    <source>
        <strain>ATCC 49951 / M / NCTC 10649</strain>
    </source>
</reference>
<evidence type="ECO:0000255" key="1">
    <source>
        <dbReference type="PROSITE-ProRule" id="PRU00303"/>
    </source>
</evidence>
<evidence type="ECO:0000305" key="2"/>
<proteinExistence type="inferred from homology"/>
<protein>
    <recommendedName>
        <fullName>Uncharacterized lipoprotein in plc 3'region</fullName>
    </recommendedName>
    <alternativeName>
        <fullName>ORF CM06</fullName>
    </alternativeName>
</protein>